<evidence type="ECO:0000255" key="1">
    <source>
        <dbReference type="HAMAP-Rule" id="MF_01350"/>
    </source>
</evidence>
<feature type="chain" id="PRO_0000299942" description="NADH-quinone oxidoreductase subunit H">
    <location>
        <begin position="1"/>
        <end position="416"/>
    </location>
</feature>
<feature type="transmembrane region" description="Helical" evidence="1">
    <location>
        <begin position="16"/>
        <end position="36"/>
    </location>
</feature>
<feature type="transmembrane region" description="Helical" evidence="1">
    <location>
        <begin position="84"/>
        <end position="104"/>
    </location>
</feature>
<feature type="transmembrane region" description="Helical" evidence="1">
    <location>
        <begin position="124"/>
        <end position="144"/>
    </location>
</feature>
<feature type="transmembrane region" description="Helical" evidence="1">
    <location>
        <begin position="165"/>
        <end position="185"/>
    </location>
</feature>
<feature type="transmembrane region" description="Helical" evidence="1">
    <location>
        <begin position="197"/>
        <end position="217"/>
    </location>
</feature>
<feature type="transmembrane region" description="Helical" evidence="1">
    <location>
        <begin position="260"/>
        <end position="280"/>
    </location>
</feature>
<feature type="transmembrane region" description="Helical" evidence="1">
    <location>
        <begin position="288"/>
        <end position="308"/>
    </location>
</feature>
<feature type="transmembrane region" description="Helical" evidence="1">
    <location>
        <begin position="320"/>
        <end position="340"/>
    </location>
</feature>
<feature type="transmembrane region" description="Helical" evidence="1">
    <location>
        <begin position="353"/>
        <end position="373"/>
    </location>
</feature>
<protein>
    <recommendedName>
        <fullName evidence="1">NADH-quinone oxidoreductase subunit H</fullName>
        <ecNumber evidence="1">7.1.1.-</ecNumber>
    </recommendedName>
    <alternativeName>
        <fullName evidence="1">NADH dehydrogenase I subunit H</fullName>
    </alternativeName>
    <alternativeName>
        <fullName evidence="1">NDH-1 subunit H</fullName>
    </alternativeName>
</protein>
<sequence length="416" mass="45259">MIHPDPTLFGHDPWWLILAKAVGVFVFLVLTVLAAILIERKVLGRMQMRFGPNRVGPKGLLQSLADGIKLALKEGITPAGVDKPVYLLAPVISVIPAFLAFAVIPMGGEVSVFGHRTALQLTDLAVAVLYILAVTSVGVYGIVLAGWASGSTYPLLGGLRSSAQVVSYEIAMALSFATVFLYAGTMSTSGIVAAQTSTWYVFLLLPSFLVYVTSMVGETNRAPFDLPEAEGELVGGFHTEYSSLKFAMFMLAEYVNMTTVSALATTMFLGGWHAPWPISLWEGANSGWWPLLWFTAKVWVFLFVYIWLRGTLPRLRYDQFMAIGWKMLIPVSLAWIMIVATAHSLRTTGHGGWASGLLIAGTVLTFGLAVILWRTMRFRADRTVPARTAADVFPIPPIPGRAGTARTPESRETTDA</sequence>
<dbReference type="EC" id="7.1.1.-" evidence="1"/>
<dbReference type="EMBL" id="CP000518">
    <property type="protein sequence ID" value="ABL90805.1"/>
    <property type="molecule type" value="Genomic_DNA"/>
</dbReference>
<dbReference type="SMR" id="A1UD97"/>
<dbReference type="STRING" id="189918.Mkms_1597"/>
<dbReference type="KEGG" id="mkm:Mkms_1597"/>
<dbReference type="HOGENOM" id="CLU_015134_0_0_11"/>
<dbReference type="OrthoDB" id="9803734at2"/>
<dbReference type="GO" id="GO:0005886">
    <property type="term" value="C:plasma membrane"/>
    <property type="evidence" value="ECO:0007669"/>
    <property type="project" value="UniProtKB-SubCell"/>
</dbReference>
<dbReference type="GO" id="GO:0003954">
    <property type="term" value="F:NADH dehydrogenase activity"/>
    <property type="evidence" value="ECO:0007669"/>
    <property type="project" value="TreeGrafter"/>
</dbReference>
<dbReference type="GO" id="GO:0016655">
    <property type="term" value="F:oxidoreductase activity, acting on NAD(P)H, quinone or similar compound as acceptor"/>
    <property type="evidence" value="ECO:0007669"/>
    <property type="project" value="UniProtKB-UniRule"/>
</dbReference>
<dbReference type="GO" id="GO:0048038">
    <property type="term" value="F:quinone binding"/>
    <property type="evidence" value="ECO:0007669"/>
    <property type="project" value="UniProtKB-KW"/>
</dbReference>
<dbReference type="GO" id="GO:0009060">
    <property type="term" value="P:aerobic respiration"/>
    <property type="evidence" value="ECO:0007669"/>
    <property type="project" value="TreeGrafter"/>
</dbReference>
<dbReference type="HAMAP" id="MF_01350">
    <property type="entry name" value="NDH1_NuoH"/>
    <property type="match status" value="1"/>
</dbReference>
<dbReference type="InterPro" id="IPR001694">
    <property type="entry name" value="NADH_UbQ_OxRdtase_su1/FPO"/>
</dbReference>
<dbReference type="InterPro" id="IPR018086">
    <property type="entry name" value="NADH_UbQ_OxRdtase_su1_CS"/>
</dbReference>
<dbReference type="NCBIfam" id="NF004741">
    <property type="entry name" value="PRK06076.1-2"/>
    <property type="match status" value="1"/>
</dbReference>
<dbReference type="NCBIfam" id="NF004743">
    <property type="entry name" value="PRK06076.1-4"/>
    <property type="match status" value="1"/>
</dbReference>
<dbReference type="PANTHER" id="PTHR11432">
    <property type="entry name" value="NADH DEHYDROGENASE SUBUNIT 1"/>
    <property type="match status" value="1"/>
</dbReference>
<dbReference type="PANTHER" id="PTHR11432:SF3">
    <property type="entry name" value="NADH-UBIQUINONE OXIDOREDUCTASE CHAIN 1"/>
    <property type="match status" value="1"/>
</dbReference>
<dbReference type="Pfam" id="PF00146">
    <property type="entry name" value="NADHdh"/>
    <property type="match status" value="1"/>
</dbReference>
<dbReference type="PROSITE" id="PS00667">
    <property type="entry name" value="COMPLEX1_ND1_1"/>
    <property type="match status" value="1"/>
</dbReference>
<dbReference type="PROSITE" id="PS00668">
    <property type="entry name" value="COMPLEX1_ND1_2"/>
    <property type="match status" value="1"/>
</dbReference>
<organism>
    <name type="scientific">Mycobacterium sp. (strain KMS)</name>
    <dbReference type="NCBI Taxonomy" id="189918"/>
    <lineage>
        <taxon>Bacteria</taxon>
        <taxon>Bacillati</taxon>
        <taxon>Actinomycetota</taxon>
        <taxon>Actinomycetes</taxon>
        <taxon>Mycobacteriales</taxon>
        <taxon>Mycobacteriaceae</taxon>
        <taxon>Mycobacterium</taxon>
    </lineage>
</organism>
<comment type="function">
    <text evidence="1">NDH-1 shuttles electrons from NADH, via FMN and iron-sulfur (Fe-S) centers, to quinones in the respiratory chain. The immediate electron acceptor for the enzyme in this species is believed to be menaquinone. Couples the redox reaction to proton translocation (for every two electrons transferred, four hydrogen ions are translocated across the cytoplasmic membrane), and thus conserves the redox energy in a proton gradient. This subunit may bind ubiquinone (By similarity).</text>
</comment>
<comment type="catalytic activity">
    <reaction evidence="1">
        <text>a quinone + NADH + 5 H(+)(in) = a quinol + NAD(+) + 4 H(+)(out)</text>
        <dbReference type="Rhea" id="RHEA:57888"/>
        <dbReference type="ChEBI" id="CHEBI:15378"/>
        <dbReference type="ChEBI" id="CHEBI:24646"/>
        <dbReference type="ChEBI" id="CHEBI:57540"/>
        <dbReference type="ChEBI" id="CHEBI:57945"/>
        <dbReference type="ChEBI" id="CHEBI:132124"/>
    </reaction>
</comment>
<comment type="subunit">
    <text evidence="1">NDH-1 is composed of 14 different subunits. Subunits NuoA, H, J, K, L, M, N constitute the membrane sector of the complex.</text>
</comment>
<comment type="subcellular location">
    <subcellularLocation>
        <location evidence="1">Cell membrane</location>
        <topology evidence="1">Multi-pass membrane protein</topology>
    </subcellularLocation>
</comment>
<comment type="similarity">
    <text evidence="1">Belongs to the complex I subunit 1 family.</text>
</comment>
<gene>
    <name evidence="1" type="primary">nuoH</name>
    <name type="ordered locus">Mkms_1597</name>
</gene>
<reference key="1">
    <citation type="submission" date="2006-12" db="EMBL/GenBank/DDBJ databases">
        <title>Complete sequence of chromosome of Mycobacterium sp. KMS.</title>
        <authorList>
            <consortium name="US DOE Joint Genome Institute"/>
            <person name="Copeland A."/>
            <person name="Lucas S."/>
            <person name="Lapidus A."/>
            <person name="Barry K."/>
            <person name="Detter J.C."/>
            <person name="Glavina del Rio T."/>
            <person name="Hammon N."/>
            <person name="Israni S."/>
            <person name="Dalin E."/>
            <person name="Tice H."/>
            <person name="Pitluck S."/>
            <person name="Kiss H."/>
            <person name="Brettin T."/>
            <person name="Bruce D."/>
            <person name="Han C."/>
            <person name="Tapia R."/>
            <person name="Gilna P."/>
            <person name="Schmutz J."/>
            <person name="Larimer F."/>
            <person name="Land M."/>
            <person name="Hauser L."/>
            <person name="Kyrpides N."/>
            <person name="Mikhailova N."/>
            <person name="Miller C.D."/>
            <person name="Richardson P."/>
        </authorList>
    </citation>
    <scope>NUCLEOTIDE SEQUENCE [LARGE SCALE GENOMIC DNA]</scope>
    <source>
        <strain>KMS</strain>
    </source>
</reference>
<accession>A1UD97</accession>
<keyword id="KW-1003">Cell membrane</keyword>
<keyword id="KW-0472">Membrane</keyword>
<keyword id="KW-0520">NAD</keyword>
<keyword id="KW-0874">Quinone</keyword>
<keyword id="KW-1278">Translocase</keyword>
<keyword id="KW-0812">Transmembrane</keyword>
<keyword id="KW-1133">Transmembrane helix</keyword>
<name>NUOH_MYCSK</name>
<proteinExistence type="inferred from homology"/>